<evidence type="ECO:0000250" key="1"/>
<evidence type="ECO:0000250" key="2">
    <source>
        <dbReference type="UniProtKB" id="Q15118"/>
    </source>
</evidence>
<evidence type="ECO:0000250" key="3">
    <source>
        <dbReference type="UniProtKB" id="Q8BFP9"/>
    </source>
</evidence>
<evidence type="ECO:0000255" key="4"/>
<evidence type="ECO:0000255" key="5">
    <source>
        <dbReference type="PROSITE-ProRule" id="PRU00107"/>
    </source>
</evidence>
<evidence type="ECO:0000269" key="6">
    <source>
    </source>
</evidence>
<evidence type="ECO:0000269" key="7">
    <source>
    </source>
</evidence>
<evidence type="ECO:0000269" key="8">
    <source>
    </source>
</evidence>
<evidence type="ECO:0000269" key="9">
    <source>
    </source>
</evidence>
<evidence type="ECO:0000269" key="10">
    <source>
    </source>
</evidence>
<evidence type="ECO:0000269" key="11">
    <source>
    </source>
</evidence>
<evidence type="ECO:0000269" key="12">
    <source>
    </source>
</evidence>
<evidence type="ECO:0000269" key="13">
    <source>
    </source>
</evidence>
<evidence type="ECO:0000269" key="14">
    <source>
    </source>
</evidence>
<evidence type="ECO:0000305" key="15"/>
<gene>
    <name type="primary">Pdk1</name>
    <name type="synonym">Pdh</name>
</gene>
<dbReference type="EC" id="2.7.11.2" evidence="6 8 9 13 14"/>
<dbReference type="EMBL" id="L22294">
    <property type="protein sequence ID" value="AAA62851.1"/>
    <property type="molecule type" value="mRNA"/>
</dbReference>
<dbReference type="PIR" id="A49686">
    <property type="entry name" value="A49686"/>
</dbReference>
<dbReference type="SMR" id="Q63065"/>
<dbReference type="FunCoup" id="Q63065">
    <property type="interactions" value="1995"/>
</dbReference>
<dbReference type="IntAct" id="Q63065">
    <property type="interactions" value="2"/>
</dbReference>
<dbReference type="MINT" id="Q63065"/>
<dbReference type="STRING" id="10116.ENSRNOP00000002072"/>
<dbReference type="BindingDB" id="Q63065"/>
<dbReference type="ChEMBL" id="CHEMBL2096663"/>
<dbReference type="iPTMnet" id="Q63065"/>
<dbReference type="PhosphoSitePlus" id="Q63065"/>
<dbReference type="SwissPalm" id="Q63065"/>
<dbReference type="PaxDb" id="10116-ENSRNOP00000002072"/>
<dbReference type="UCSC" id="RGD:69427">
    <property type="organism name" value="rat"/>
</dbReference>
<dbReference type="AGR" id="RGD:69427"/>
<dbReference type="RGD" id="69427">
    <property type="gene designation" value="Pdk1"/>
</dbReference>
<dbReference type="eggNOG" id="KOG0787">
    <property type="taxonomic scope" value="Eukaryota"/>
</dbReference>
<dbReference type="InParanoid" id="Q63065"/>
<dbReference type="PhylomeDB" id="Q63065"/>
<dbReference type="BRENDA" id="2.7.11.2">
    <property type="organism ID" value="5301"/>
</dbReference>
<dbReference type="Reactome" id="R-RNO-204174">
    <property type="pathway name" value="Regulation of pyruvate dehydrogenase (PDH) complex"/>
</dbReference>
<dbReference type="Reactome" id="R-RNO-5362517">
    <property type="pathway name" value="Signaling by Retinoic Acid"/>
</dbReference>
<dbReference type="Reactome" id="R-RNO-9837999">
    <property type="pathway name" value="Mitochondrial protein degradation"/>
</dbReference>
<dbReference type="PRO" id="PR:Q63065"/>
<dbReference type="Proteomes" id="UP000002494">
    <property type="component" value="Unplaced"/>
</dbReference>
<dbReference type="GO" id="GO:0005759">
    <property type="term" value="C:mitochondrial matrix"/>
    <property type="evidence" value="ECO:0007669"/>
    <property type="project" value="UniProtKB-SubCell"/>
</dbReference>
<dbReference type="GO" id="GO:0005739">
    <property type="term" value="C:mitochondrion"/>
    <property type="evidence" value="ECO:0000318"/>
    <property type="project" value="GO_Central"/>
</dbReference>
<dbReference type="GO" id="GO:0045254">
    <property type="term" value="C:pyruvate dehydrogenase complex"/>
    <property type="evidence" value="ECO:0000314"/>
    <property type="project" value="RGD"/>
</dbReference>
<dbReference type="GO" id="GO:0005524">
    <property type="term" value="F:ATP binding"/>
    <property type="evidence" value="ECO:0000314"/>
    <property type="project" value="RGD"/>
</dbReference>
<dbReference type="GO" id="GO:0042802">
    <property type="term" value="F:identical protein binding"/>
    <property type="evidence" value="ECO:0000353"/>
    <property type="project" value="RGD"/>
</dbReference>
<dbReference type="GO" id="GO:0004672">
    <property type="term" value="F:protein kinase activity"/>
    <property type="evidence" value="ECO:0000266"/>
    <property type="project" value="RGD"/>
</dbReference>
<dbReference type="GO" id="GO:0004674">
    <property type="term" value="F:protein serine/threonine kinase activity"/>
    <property type="evidence" value="ECO:0000314"/>
    <property type="project" value="UniProtKB"/>
</dbReference>
<dbReference type="GO" id="GO:0044877">
    <property type="term" value="F:protein-containing complex binding"/>
    <property type="evidence" value="ECO:0000314"/>
    <property type="project" value="RGD"/>
</dbReference>
<dbReference type="GO" id="GO:0004740">
    <property type="term" value="F:pyruvate dehydrogenase (acetyl-transferring) kinase activity"/>
    <property type="evidence" value="ECO:0000314"/>
    <property type="project" value="UniProtKB"/>
</dbReference>
<dbReference type="GO" id="GO:0008283">
    <property type="term" value="P:cell population proliferation"/>
    <property type="evidence" value="ECO:0000250"/>
    <property type="project" value="UniProtKB"/>
</dbReference>
<dbReference type="GO" id="GO:0007166">
    <property type="term" value="P:cell surface receptor signaling pathway"/>
    <property type="evidence" value="ECO:0000315"/>
    <property type="project" value="RGD"/>
</dbReference>
<dbReference type="GO" id="GO:0097411">
    <property type="term" value="P:hypoxia-inducible factor-1alpha signaling pathway"/>
    <property type="evidence" value="ECO:0000250"/>
    <property type="project" value="UniProtKB"/>
</dbReference>
<dbReference type="GO" id="GO:0008631">
    <property type="term" value="P:intrinsic apoptotic signaling pathway in response to oxidative stress"/>
    <property type="evidence" value="ECO:0000250"/>
    <property type="project" value="UniProtKB"/>
</dbReference>
<dbReference type="GO" id="GO:0018105">
    <property type="term" value="P:peptidyl-serine phosphorylation"/>
    <property type="evidence" value="ECO:0000314"/>
    <property type="project" value="UniProtKB"/>
</dbReference>
<dbReference type="GO" id="GO:0010510">
    <property type="term" value="P:regulation of acetyl-CoA biosynthetic process from pyruvate"/>
    <property type="evidence" value="ECO:0000266"/>
    <property type="project" value="RGD"/>
</dbReference>
<dbReference type="GO" id="GO:0010906">
    <property type="term" value="P:regulation of glucose metabolic process"/>
    <property type="evidence" value="ECO:0000250"/>
    <property type="project" value="UniProtKB"/>
</dbReference>
<dbReference type="CDD" id="cd16929">
    <property type="entry name" value="HATPase_PDK-like"/>
    <property type="match status" value="1"/>
</dbReference>
<dbReference type="FunFam" id="1.20.140.20:FF:000001">
    <property type="entry name" value="[Pyruvate dehydrogenase (acetyl-transferring)] kinase isozyme 2, mitochondrial"/>
    <property type="match status" value="1"/>
</dbReference>
<dbReference type="FunFam" id="3.30.565.10:FF:000007">
    <property type="entry name" value="Mitochondrial pyruvate dehydrogenase kinase isoform 2"/>
    <property type="match status" value="1"/>
</dbReference>
<dbReference type="Gene3D" id="1.20.140.20">
    <property type="entry name" value="Alpha-ketoacid/pyruvate dehydrogenase kinase, N-terminal domain"/>
    <property type="match status" value="1"/>
</dbReference>
<dbReference type="Gene3D" id="3.30.565.10">
    <property type="entry name" value="Histidine kinase-like ATPase, C-terminal domain"/>
    <property type="match status" value="1"/>
</dbReference>
<dbReference type="InterPro" id="IPR036784">
    <property type="entry name" value="AK/P_DHK_N_sf"/>
</dbReference>
<dbReference type="InterPro" id="IPR018955">
    <property type="entry name" value="BCDHK/PDK_N"/>
</dbReference>
<dbReference type="InterPro" id="IPR039028">
    <property type="entry name" value="BCKD/PDK"/>
</dbReference>
<dbReference type="InterPro" id="IPR036890">
    <property type="entry name" value="HATPase_C_sf"/>
</dbReference>
<dbReference type="InterPro" id="IPR005467">
    <property type="entry name" value="His_kinase_dom"/>
</dbReference>
<dbReference type="PANTHER" id="PTHR11947:SF14">
    <property type="entry name" value="[PYRUVATE DEHYDROGENASE (ACETYL-TRANSFERRING)] KINASE ISOZYME 1, MITOCHONDRIAL"/>
    <property type="match status" value="1"/>
</dbReference>
<dbReference type="PANTHER" id="PTHR11947">
    <property type="entry name" value="PYRUVATE DEHYDROGENASE KINASE"/>
    <property type="match status" value="1"/>
</dbReference>
<dbReference type="Pfam" id="PF10436">
    <property type="entry name" value="BCDHK_Adom3"/>
    <property type="match status" value="1"/>
</dbReference>
<dbReference type="Pfam" id="PF02518">
    <property type="entry name" value="HATPase_c"/>
    <property type="match status" value="1"/>
</dbReference>
<dbReference type="SMART" id="SM00387">
    <property type="entry name" value="HATPase_c"/>
    <property type="match status" value="1"/>
</dbReference>
<dbReference type="SUPFAM" id="SSF69012">
    <property type="entry name" value="alpha-ketoacid dehydrogenase kinase, N-terminal domain"/>
    <property type="match status" value="1"/>
</dbReference>
<dbReference type="SUPFAM" id="SSF55874">
    <property type="entry name" value="ATPase domain of HSP90 chaperone/DNA topoisomerase II/histidine kinase"/>
    <property type="match status" value="1"/>
</dbReference>
<dbReference type="PROSITE" id="PS50109">
    <property type="entry name" value="HIS_KIN"/>
    <property type="match status" value="1"/>
</dbReference>
<keyword id="KW-0067">ATP-binding</keyword>
<keyword id="KW-0903">Direct protein sequencing</keyword>
<keyword id="KW-0418">Kinase</keyword>
<keyword id="KW-0496">Mitochondrion</keyword>
<keyword id="KW-0547">Nucleotide-binding</keyword>
<keyword id="KW-0597">Phosphoprotein</keyword>
<keyword id="KW-1185">Reference proteome</keyword>
<keyword id="KW-0808">Transferase</keyword>
<keyword id="KW-0809">Transit peptide</keyword>
<sequence length="434" mass="49081">MRLARLLRGGTSVRPLCAVPCASRSLASDSASGSGPASESGVPGQVDFYARFSPSPLSMKQFLDFGSVNACEKTSFMFLRQELPVRLANIMKEISLLPDNLLRTPSVQLVQSWYIQSLQELLDFKDKSAEDAKTIYEFTDTVIRIRNRHNDVIPTMAQGVTEYKESFGVDPVTSQNVQYFLDRFYMSRISIRMLLNQHSLLFGGKGSPSHRKHIGSINPNCDVVEVIKDGYENARRLCDLYYVNSPELELEELNAKSPGQPIQVVYVPSHLYHMVFELFKNAMRATMEHHADKGVYPPIQVHVTLGEEDLTVKMSDRGGGVPLRKIDRLFNYMYSTAPRPRVETSRAVPLAGFGYGLPISRLYAQYFQGDLKLYSLEGYGTDAVIYIKALSTESIERLPVYNKAAWKHYRTNHEADDWCVPSREPKDMTTFRSS</sequence>
<reference key="1">
    <citation type="journal article" date="1993" name="J. Biol. Chem.">
        <title>Primary structure of pyruvate dehydrogenase kinase establishes a new family of eukaryotic protein kinases.</title>
        <authorList>
            <person name="Popov K.M."/>
            <person name="Kedishvili N.Y."/>
            <person name="Zhao Y."/>
            <person name="Shimomura Y."/>
            <person name="Crabb D.W."/>
            <person name="Harris R.A."/>
        </authorList>
    </citation>
    <scope>NUCLEOTIDE SEQUENCE [MRNA]</scope>
    <scope>PARTIAL PROTEIN SEQUENCE</scope>
    <scope>FUNCTION</scope>
    <scope>CATALYTIC ACTIVITY</scope>
    <scope>ACTIVITY REGULATION</scope>
    <scope>SUBUNIT</scope>
    <scope>TISSUE SPECIFICITY</scope>
    <source>
        <strain>Sprague-Dawley</strain>
        <tissue>Heart</tissue>
    </source>
</reference>
<reference key="2">
    <citation type="journal article" date="1998" name="Biochem. J.">
        <title>Evidence for existence of tissue-specific regulation of the mammalian pyruvate dehydrogenase complex.</title>
        <authorList>
            <person name="Bowker-Kinley M.M."/>
            <person name="Davis W.I."/>
            <person name="Wu P."/>
            <person name="Harris R.A."/>
            <person name="Popov K.M."/>
        </authorList>
    </citation>
    <scope>CATALYTIC ACTIVITY</scope>
    <scope>ACTIVITY REGULATION</scope>
    <scope>TISSUE SPECIFICITY</scope>
</reference>
<reference key="3">
    <citation type="journal article" date="2001" name="Diabetes">
        <title>Selective modification of pyruvate dehydrogenase kinase isoform expression in rat pancreatic islets elicited by starvation and activation of peroxisome proliferator-activated receptor-alpha: implications for glucose-stimulated insulin secretion.</title>
        <authorList>
            <person name="Sugden M.C."/>
            <person name="Bulmer K."/>
            <person name="Augustine D."/>
            <person name="Holness M.J."/>
        </authorList>
    </citation>
    <scope>INDUCTION</scope>
    <scope>TISSUE SPECIFICITY</scope>
</reference>
<reference key="4">
    <citation type="journal article" date="2001" name="J. Biol. Chem.">
        <title>Site specificity of four pyruvate dehydrogenase kinase isoenzymes toward the three phosphorylation sites of human pyruvate dehydrogenase.</title>
        <authorList>
            <person name="Korotchkina L.G."/>
            <person name="Patel M.S."/>
        </authorList>
    </citation>
    <scope>CATALYTIC ACTIVITY</scope>
    <scope>FUNCTION</scope>
</reference>
<reference key="5">
    <citation type="journal article" date="2002" name="Biochem. J.">
        <title>Interaction between the individual isoenzymes of pyruvate dehydrogenase kinase and the inner lipoyl-bearing domain of transacetylase component of pyruvate dehydrogenase complex.</title>
        <authorList>
            <person name="Tuganova A."/>
            <person name="Boulatnikov I."/>
            <person name="Popov K.M."/>
        </authorList>
    </citation>
    <scope>INTERACTION WITH DLAT</scope>
    <scope>ACTIVITY REGULATION</scope>
    <scope>CATALYTIC ACTIVITY</scope>
</reference>
<reference key="6">
    <citation type="journal article" date="2003" name="Biochim. Biophys. Acta">
        <title>Formation of functional heterodimers by isozymes 1 and 2 of pyruvate dehydrogenase kinase.</title>
        <authorList>
            <person name="Boulatnikov I."/>
            <person name="Popov K.M."/>
        </authorList>
    </citation>
    <scope>CATALYTIC ACTIVITY</scope>
    <scope>FUNCTION</scope>
    <scope>INTERACTION WITH PDK2</scope>
    <scope>SUBUNIT</scope>
</reference>
<reference key="7">
    <citation type="journal article" date="2011" name="PLoS ONE">
        <title>Amyloid beta resistance in nerve cell lines is mediated by the Warburg effect.</title>
        <authorList>
            <person name="Newington J.T."/>
            <person name="Pitts A."/>
            <person name="Chien A."/>
            <person name="Arseneault R."/>
            <person name="Schubert D."/>
            <person name="Cumming R.C."/>
        </authorList>
    </citation>
    <scope>FUNCTION</scope>
</reference>
<reference key="8">
    <citation type="journal article" date="2012" name="J. Biol. Chem.">
        <title>Overexpression of pyruvate dehydrogenase kinase 1 and lactate dehydrogenase A in nerve cells confers resistance to amyloid beta and other toxins by decreasing mitochondrial respiration and reactive oxygen species production.</title>
        <authorList>
            <person name="Newington J.T."/>
            <person name="Rappon T."/>
            <person name="Albers S."/>
            <person name="Wong D.Y."/>
            <person name="Rylett R.J."/>
            <person name="Cumming R.C."/>
        </authorList>
    </citation>
    <scope>FUNCTION</scope>
</reference>
<reference key="9">
    <citation type="journal article" date="2012" name="Surgery">
        <title>Liver epithelial cells proliferate under hypoxia and protect the liver from ischemic injury via expression of HIF-1 alpha target genes.</title>
        <authorList>
            <person name="Abe Y."/>
            <person name="Uchinami H."/>
            <person name="Kudoh K."/>
            <person name="Nakagawa Y."/>
            <person name="Ise N."/>
            <person name="Watanabe G."/>
            <person name="Sato T."/>
            <person name="Seki E."/>
            <person name="Yamamoto Y."/>
        </authorList>
    </citation>
    <scope>INDUCTION BY HYPOXIA</scope>
    <scope>FUNCTION</scope>
</reference>
<comment type="function">
    <text evidence="6 9 10 11 12 13">Kinase that plays a key role in regulation of glucose and fatty acid metabolism and homeostasis via phosphorylation of the pyruvate dehydrogenase subunits PDHA1 and PDHA2. This inhibits pyruvate dehydrogenase activity, and thereby regulates metabolite flux through the tricarboxylic acid cycle, down-regulates aerobic respiration and inhibits the formation of acetyl-coenzyme A from pyruvate. Plays an important role in cellular responses to hypoxia and is important for cell proliferation under hypoxia.</text>
</comment>
<comment type="catalytic activity">
    <reaction evidence="6 8 9 13 14">
        <text>L-seryl-[pyruvate dehydrogenase E1 alpha subunit] + ATP = O-phospho-L-seryl-[pyruvate dehydrogenase E1 alpha subunit] + ADP + H(+)</text>
        <dbReference type="Rhea" id="RHEA:23052"/>
        <dbReference type="Rhea" id="RHEA-COMP:13689"/>
        <dbReference type="Rhea" id="RHEA-COMP:13690"/>
        <dbReference type="ChEBI" id="CHEBI:15378"/>
        <dbReference type="ChEBI" id="CHEBI:29999"/>
        <dbReference type="ChEBI" id="CHEBI:30616"/>
        <dbReference type="ChEBI" id="CHEBI:83421"/>
        <dbReference type="ChEBI" id="CHEBI:456216"/>
        <dbReference type="EC" id="2.7.11.2"/>
    </reaction>
</comment>
<comment type="activity regulation">
    <text evidence="8 13 14">Activated by binding to the pyruvate dehydrogenase complex subunit DLAT. Strongly activated by NADH plus acetyl-coenzyme A. Inhibited by dichloroacetate.</text>
</comment>
<comment type="subunit">
    <text evidence="2 8 9 13">Homodimer, and heterodimer with PDK2 (PubMed:8253790, PubMed:12573248). Interacts with the pyruvate dehydrogenase complex subunit DLAT, and is part of the multimeric pyruvate dehydrogenase complex that contains multiple copies of pyruvate dehydrogenase (E1), dihydrolipoamide acetyltransferase (DLAT, E2) and lipoamide dehydrogenase (DLD, E3) (PubMed:11978179). Interacts with phosphoglycerate kinase PGK1; the interaction is direct, occurs under hypoxic conditions and leads to PDK1-mediated inhibition of pyruvate dehydrogenase complex activity (By similarity).</text>
</comment>
<comment type="subcellular location">
    <subcellularLocation>
        <location>Mitochondrion matrix</location>
    </subcellularLocation>
</comment>
<comment type="tissue specificity">
    <text evidence="7 13 14">Detected in pancreas islets (at protein level). Expressed predominantly in the heart.</text>
</comment>
<comment type="induction">
    <text evidence="7 11">Up-regulated via the HIF1A signaling pathway in response to hypoxia. Down-regulated in response to prolonged fasting.</text>
</comment>
<comment type="PTM">
    <text evidence="2">Phosphorylated by constitutively activated ABL1, FGFR1, FLT3 and JAK2 (in vitro), and this may also occur in cancer cells that express constitutively activated ABL1, FGFR1, FLT3 and JAK2. Phosphorylation at Tyr-241 and Tyr-242 strongly increases kinase activity, while phosphorylation at Tyr-136 has a lesser effect (By similarity). Phosphorylated under hypoxic conditions at Thr-336 by phosphoglycerate kinase PGK1 which has an activating effect (By similarity).</text>
</comment>
<comment type="similarity">
    <text evidence="15">Belongs to the PDK/BCKDK protein kinase family.</text>
</comment>
<feature type="transit peptide" description="Mitochondrion" evidence="4">
    <location>
        <begin position="1"/>
        <end position="26"/>
    </location>
</feature>
<feature type="chain" id="PRO_0000023439" description="[Pyruvate dehydrogenase (acetyl-transferring)] kinase isozyme 1, mitochondrial">
    <location>
        <begin position="27"/>
        <end position="434"/>
    </location>
</feature>
<feature type="domain" description="Histidine kinase" evidence="5">
    <location>
        <begin position="161"/>
        <end position="391"/>
    </location>
</feature>
<feature type="binding site" evidence="1">
    <location>
        <begin position="277"/>
        <end position="284"/>
    </location>
    <ligand>
        <name>ATP</name>
        <dbReference type="ChEBI" id="CHEBI:30616"/>
    </ligand>
</feature>
<feature type="binding site" evidence="1">
    <location>
        <position position="316"/>
    </location>
    <ligand>
        <name>ATP</name>
        <dbReference type="ChEBI" id="CHEBI:30616"/>
    </ligand>
</feature>
<feature type="binding site" evidence="1">
    <location>
        <begin position="335"/>
        <end position="336"/>
    </location>
    <ligand>
        <name>ATP</name>
        <dbReference type="ChEBI" id="CHEBI:30616"/>
    </ligand>
</feature>
<feature type="binding site" evidence="1">
    <location>
        <begin position="352"/>
        <end position="357"/>
    </location>
    <ligand>
        <name>ATP</name>
        <dbReference type="ChEBI" id="CHEBI:30616"/>
    </ligand>
</feature>
<feature type="modified residue" description="Phosphotyrosine; by FGFR1" evidence="2">
    <location>
        <position position="136"/>
    </location>
</feature>
<feature type="modified residue" description="Phosphotyrosine; by FGFR1, ABL1, FLT3 and JAK2" evidence="2">
    <location>
        <position position="241"/>
    </location>
</feature>
<feature type="modified residue" description="Phosphotyrosine; by FGFR1" evidence="2">
    <location>
        <position position="242"/>
    </location>
</feature>
<feature type="modified residue" description="Phosphothreonine" evidence="2">
    <location>
        <position position="336"/>
    </location>
</feature>
<feature type="modified residue" description="N6-succinyllysine" evidence="3">
    <location>
        <position position="403"/>
    </location>
</feature>
<name>PDK1_RAT</name>
<proteinExistence type="evidence at protein level"/>
<organism>
    <name type="scientific">Rattus norvegicus</name>
    <name type="common">Rat</name>
    <dbReference type="NCBI Taxonomy" id="10116"/>
    <lineage>
        <taxon>Eukaryota</taxon>
        <taxon>Metazoa</taxon>
        <taxon>Chordata</taxon>
        <taxon>Craniata</taxon>
        <taxon>Vertebrata</taxon>
        <taxon>Euteleostomi</taxon>
        <taxon>Mammalia</taxon>
        <taxon>Eutheria</taxon>
        <taxon>Euarchontoglires</taxon>
        <taxon>Glires</taxon>
        <taxon>Rodentia</taxon>
        <taxon>Myomorpha</taxon>
        <taxon>Muroidea</taxon>
        <taxon>Muridae</taxon>
        <taxon>Murinae</taxon>
        <taxon>Rattus</taxon>
    </lineage>
</organism>
<protein>
    <recommendedName>
        <fullName>[Pyruvate dehydrogenase (acetyl-transferring)] kinase isozyme 1, mitochondrial</fullName>
        <ecNumber evidence="6 8 9 13 14">2.7.11.2</ecNumber>
    </recommendedName>
    <alternativeName>
        <fullName>PDK p48</fullName>
    </alternativeName>
    <alternativeName>
        <fullName>Pyruvate dehydrogenase kinase isoform 1</fullName>
        <shortName>PDH kinase 1</shortName>
    </alternativeName>
</protein>
<accession>Q63065</accession>